<keyword id="KW-0028">Amino-acid biosynthesis</keyword>
<keyword id="KW-0963">Cytoplasm</keyword>
<keyword id="KW-0368">Histidine biosynthesis</keyword>
<keyword id="KW-0413">Isomerase</keyword>
<organism>
    <name type="scientific">Staphylococcus aureus (strain MRSA252)</name>
    <dbReference type="NCBI Taxonomy" id="282458"/>
    <lineage>
        <taxon>Bacteria</taxon>
        <taxon>Bacillati</taxon>
        <taxon>Bacillota</taxon>
        <taxon>Bacilli</taxon>
        <taxon>Bacillales</taxon>
        <taxon>Staphylococcaceae</taxon>
        <taxon>Staphylococcus</taxon>
    </lineage>
</organism>
<feature type="chain" id="PRO_0000142055" description="1-(5-phosphoribosyl)-5-[(5-phosphoribosylamino)methylideneamino] imidazole-4-carboxamide isomerase">
    <location>
        <begin position="1"/>
        <end position="234"/>
    </location>
</feature>
<feature type="active site" description="Proton acceptor" evidence="1">
    <location>
        <position position="9"/>
    </location>
</feature>
<feature type="active site" description="Proton donor" evidence="1">
    <location>
        <position position="131"/>
    </location>
</feature>
<reference key="1">
    <citation type="journal article" date="2004" name="Proc. Natl. Acad. Sci. U.S.A.">
        <title>Complete genomes of two clinical Staphylococcus aureus strains: evidence for the rapid evolution of virulence and drug resistance.</title>
        <authorList>
            <person name="Holden M.T.G."/>
            <person name="Feil E.J."/>
            <person name="Lindsay J.A."/>
            <person name="Peacock S.J."/>
            <person name="Day N.P.J."/>
            <person name="Enright M.C."/>
            <person name="Foster T.J."/>
            <person name="Moore C.E."/>
            <person name="Hurst L."/>
            <person name="Atkin R."/>
            <person name="Barron A."/>
            <person name="Bason N."/>
            <person name="Bentley S.D."/>
            <person name="Chillingworth C."/>
            <person name="Chillingworth T."/>
            <person name="Churcher C."/>
            <person name="Clark L."/>
            <person name="Corton C."/>
            <person name="Cronin A."/>
            <person name="Doggett J."/>
            <person name="Dowd L."/>
            <person name="Feltwell T."/>
            <person name="Hance Z."/>
            <person name="Harris B."/>
            <person name="Hauser H."/>
            <person name="Holroyd S."/>
            <person name="Jagels K."/>
            <person name="James K.D."/>
            <person name="Lennard N."/>
            <person name="Line A."/>
            <person name="Mayes R."/>
            <person name="Moule S."/>
            <person name="Mungall K."/>
            <person name="Ormond D."/>
            <person name="Quail M.A."/>
            <person name="Rabbinowitsch E."/>
            <person name="Rutherford K.M."/>
            <person name="Sanders M."/>
            <person name="Sharp S."/>
            <person name="Simmonds M."/>
            <person name="Stevens K."/>
            <person name="Whitehead S."/>
            <person name="Barrell B.G."/>
            <person name="Spratt B.G."/>
            <person name="Parkhill J."/>
        </authorList>
    </citation>
    <scope>NUCLEOTIDE SEQUENCE [LARGE SCALE GENOMIC DNA]</scope>
    <source>
        <strain>MRSA252</strain>
    </source>
</reference>
<comment type="catalytic activity">
    <reaction evidence="1">
        <text>1-(5-phospho-beta-D-ribosyl)-5-[(5-phospho-beta-D-ribosylamino)methylideneamino]imidazole-4-carboxamide = 5-[(5-phospho-1-deoxy-D-ribulos-1-ylimino)methylamino]-1-(5-phospho-beta-D-ribosyl)imidazole-4-carboxamide</text>
        <dbReference type="Rhea" id="RHEA:15469"/>
        <dbReference type="ChEBI" id="CHEBI:58435"/>
        <dbReference type="ChEBI" id="CHEBI:58525"/>
        <dbReference type="EC" id="5.3.1.16"/>
    </reaction>
</comment>
<comment type="pathway">
    <text evidence="1">Amino-acid biosynthesis; L-histidine biosynthesis; L-histidine from 5-phospho-alpha-D-ribose 1-diphosphate: step 4/9.</text>
</comment>
<comment type="subcellular location">
    <subcellularLocation>
        <location evidence="1">Cytoplasm</location>
    </subcellularLocation>
</comment>
<comment type="similarity">
    <text evidence="1">Belongs to the HisA/HisF family.</text>
</comment>
<gene>
    <name evidence="1" type="primary">hisA</name>
    <name type="ordered locus">SAR2756</name>
</gene>
<protein>
    <recommendedName>
        <fullName evidence="1">1-(5-phosphoribosyl)-5-[(5-phosphoribosylamino)methylideneamino] imidazole-4-carboxamide isomerase</fullName>
        <ecNumber evidence="1">5.3.1.16</ecNumber>
    </recommendedName>
    <alternativeName>
        <fullName evidence="1">Phosphoribosylformimino-5-aminoimidazole carboxamide ribotide isomerase</fullName>
    </alternativeName>
</protein>
<accession>Q6GDD0</accession>
<sequence>MIELWPAIDLIGSTSVRLTEGKYDSEEKMSRSAEESIAYYSQFECVNRIHIVDLIGAKAQHAREFDYIKSLRRLTTKDIEVGGGIRTKSQIMDYFAAGINYCIVGTKGIQDTEWLKEMAHTFPGRIYLSVDAYGEDIKVNGWEEDTELNLFSFVKQLSDIPIGGIIYTDIAKDGKMSGPNFELTGQLVKATTIPVIASGGIRHQQDIQRLASLNVHAAIIGKAAHQASFWEGLK</sequence>
<proteinExistence type="inferred from homology"/>
<dbReference type="EC" id="5.3.1.16" evidence="1"/>
<dbReference type="EMBL" id="BX571856">
    <property type="protein sequence ID" value="CAG41731.1"/>
    <property type="molecule type" value="Genomic_DNA"/>
</dbReference>
<dbReference type="RefSeq" id="WP_000571739.1">
    <property type="nucleotide sequence ID" value="NC_002952.2"/>
</dbReference>
<dbReference type="SMR" id="Q6GDD0"/>
<dbReference type="KEGG" id="sar:SAR2756"/>
<dbReference type="HOGENOM" id="CLU_048577_1_2_9"/>
<dbReference type="UniPathway" id="UPA00031">
    <property type="reaction ID" value="UER00009"/>
</dbReference>
<dbReference type="Proteomes" id="UP000000596">
    <property type="component" value="Chromosome"/>
</dbReference>
<dbReference type="GO" id="GO:0005737">
    <property type="term" value="C:cytoplasm"/>
    <property type="evidence" value="ECO:0007669"/>
    <property type="project" value="UniProtKB-SubCell"/>
</dbReference>
<dbReference type="GO" id="GO:0003949">
    <property type="term" value="F:1-(5-phosphoribosyl)-5-[(5-phosphoribosylamino)methylideneamino]imidazole-4-carboxamide isomerase activity"/>
    <property type="evidence" value="ECO:0007669"/>
    <property type="project" value="UniProtKB-UniRule"/>
</dbReference>
<dbReference type="GO" id="GO:0000105">
    <property type="term" value="P:L-histidine biosynthetic process"/>
    <property type="evidence" value="ECO:0007669"/>
    <property type="project" value="UniProtKB-UniRule"/>
</dbReference>
<dbReference type="GO" id="GO:0000162">
    <property type="term" value="P:L-tryptophan biosynthetic process"/>
    <property type="evidence" value="ECO:0007669"/>
    <property type="project" value="TreeGrafter"/>
</dbReference>
<dbReference type="CDD" id="cd04732">
    <property type="entry name" value="HisA"/>
    <property type="match status" value="1"/>
</dbReference>
<dbReference type="FunFam" id="3.20.20.70:FF:000213">
    <property type="entry name" value="1-(5-phosphoribosyl)-5-[(5-phosphoribosylamino)methylideneamino] imidazole-4-carboxamide isomerase"/>
    <property type="match status" value="1"/>
</dbReference>
<dbReference type="Gene3D" id="3.20.20.70">
    <property type="entry name" value="Aldolase class I"/>
    <property type="match status" value="1"/>
</dbReference>
<dbReference type="HAMAP" id="MF_01014">
    <property type="entry name" value="HisA"/>
    <property type="match status" value="1"/>
</dbReference>
<dbReference type="InterPro" id="IPR013785">
    <property type="entry name" value="Aldolase_TIM"/>
</dbReference>
<dbReference type="InterPro" id="IPR006062">
    <property type="entry name" value="His_biosynth"/>
</dbReference>
<dbReference type="InterPro" id="IPR006063">
    <property type="entry name" value="HisA_bact_arch"/>
</dbReference>
<dbReference type="InterPro" id="IPR044524">
    <property type="entry name" value="Isoase_HisA-like"/>
</dbReference>
<dbReference type="InterPro" id="IPR023016">
    <property type="entry name" value="Isoase_HisA-like_bact"/>
</dbReference>
<dbReference type="InterPro" id="IPR011060">
    <property type="entry name" value="RibuloseP-bd_barrel"/>
</dbReference>
<dbReference type="NCBIfam" id="TIGR00007">
    <property type="entry name" value="1-(5-phosphoribosyl)-5-[(5-phosphoribosylamino)methylideneamino]imidazole-4-carboxamide isomerase"/>
    <property type="match status" value="1"/>
</dbReference>
<dbReference type="NCBIfam" id="NF010114">
    <property type="entry name" value="PRK13587.1"/>
    <property type="match status" value="1"/>
</dbReference>
<dbReference type="PANTHER" id="PTHR43090">
    <property type="entry name" value="1-(5-PHOSPHORIBOSYL)-5-[(5-PHOSPHORIBOSYLAMINO)METHYLIDENEAMINO] IMIDAZOLE-4-CARBOXAMIDE ISOMERASE"/>
    <property type="match status" value="1"/>
</dbReference>
<dbReference type="PANTHER" id="PTHR43090:SF2">
    <property type="entry name" value="1-(5-PHOSPHORIBOSYL)-5-[(5-PHOSPHORIBOSYLAMINO)METHYLIDENEAMINO] IMIDAZOLE-4-CARBOXAMIDE ISOMERASE"/>
    <property type="match status" value="1"/>
</dbReference>
<dbReference type="Pfam" id="PF00977">
    <property type="entry name" value="His_biosynth"/>
    <property type="match status" value="1"/>
</dbReference>
<dbReference type="SUPFAM" id="SSF51366">
    <property type="entry name" value="Ribulose-phoshate binding barrel"/>
    <property type="match status" value="1"/>
</dbReference>
<evidence type="ECO:0000255" key="1">
    <source>
        <dbReference type="HAMAP-Rule" id="MF_01014"/>
    </source>
</evidence>
<name>HIS4_STAAR</name>